<protein>
    <recommendedName>
        <fullName evidence="1">3-demethoxyubiquinol 3-hydroxylase</fullName>
        <shortName evidence="1">DMQ hydroxylase</shortName>
        <ecNumber evidence="1">1.14.99.60</ecNumber>
    </recommendedName>
    <alternativeName>
        <fullName evidence="1">2-nonaprenyl-3-methyl-6-methoxy-1,4-benzoquinol hydroxylase</fullName>
    </alternativeName>
</protein>
<feature type="chain" id="PRO_1000187057" description="3-demethoxyubiquinol 3-hydroxylase">
    <location>
        <begin position="1"/>
        <end position="217"/>
    </location>
</feature>
<feature type="binding site" evidence="1">
    <location>
        <position position="66"/>
    </location>
    <ligand>
        <name>Fe cation</name>
        <dbReference type="ChEBI" id="CHEBI:24875"/>
        <label>1</label>
    </ligand>
</feature>
<feature type="binding site" evidence="1">
    <location>
        <position position="96"/>
    </location>
    <ligand>
        <name>Fe cation</name>
        <dbReference type="ChEBI" id="CHEBI:24875"/>
        <label>1</label>
    </ligand>
</feature>
<feature type="binding site" evidence="1">
    <location>
        <position position="96"/>
    </location>
    <ligand>
        <name>Fe cation</name>
        <dbReference type="ChEBI" id="CHEBI:24875"/>
        <label>2</label>
    </ligand>
</feature>
<feature type="binding site" evidence="1">
    <location>
        <position position="99"/>
    </location>
    <ligand>
        <name>Fe cation</name>
        <dbReference type="ChEBI" id="CHEBI:24875"/>
        <label>1</label>
    </ligand>
</feature>
<feature type="binding site" evidence="1">
    <location>
        <position position="148"/>
    </location>
    <ligand>
        <name>Fe cation</name>
        <dbReference type="ChEBI" id="CHEBI:24875"/>
        <label>2</label>
    </ligand>
</feature>
<feature type="binding site" evidence="1">
    <location>
        <position position="180"/>
    </location>
    <ligand>
        <name>Fe cation</name>
        <dbReference type="ChEBI" id="CHEBI:24875"/>
        <label>1</label>
    </ligand>
</feature>
<feature type="binding site" evidence="1">
    <location>
        <position position="180"/>
    </location>
    <ligand>
        <name>Fe cation</name>
        <dbReference type="ChEBI" id="CHEBI:24875"/>
        <label>2</label>
    </ligand>
</feature>
<feature type="binding site" evidence="1">
    <location>
        <position position="183"/>
    </location>
    <ligand>
        <name>Fe cation</name>
        <dbReference type="ChEBI" id="CHEBI:24875"/>
        <label>2</label>
    </ligand>
</feature>
<keyword id="KW-1003">Cell membrane</keyword>
<keyword id="KW-0408">Iron</keyword>
<keyword id="KW-0472">Membrane</keyword>
<keyword id="KW-0479">Metal-binding</keyword>
<keyword id="KW-0503">Monooxygenase</keyword>
<keyword id="KW-0560">Oxidoreductase</keyword>
<keyword id="KW-0831">Ubiquinone biosynthesis</keyword>
<comment type="function">
    <text evidence="1">Catalyzes the hydroxylation of 2-nonaprenyl-3-methyl-6-methoxy-1,4-benzoquinol during ubiquinone biosynthesis.</text>
</comment>
<comment type="catalytic activity">
    <reaction evidence="1">
        <text>a 5-methoxy-2-methyl-3-(all-trans-polyprenyl)benzene-1,4-diol + AH2 + O2 = a 3-demethylubiquinol + A + H2O</text>
        <dbReference type="Rhea" id="RHEA:50908"/>
        <dbReference type="Rhea" id="RHEA-COMP:10859"/>
        <dbReference type="Rhea" id="RHEA-COMP:10914"/>
        <dbReference type="ChEBI" id="CHEBI:13193"/>
        <dbReference type="ChEBI" id="CHEBI:15377"/>
        <dbReference type="ChEBI" id="CHEBI:15379"/>
        <dbReference type="ChEBI" id="CHEBI:17499"/>
        <dbReference type="ChEBI" id="CHEBI:84167"/>
        <dbReference type="ChEBI" id="CHEBI:84422"/>
        <dbReference type="EC" id="1.14.99.60"/>
    </reaction>
</comment>
<comment type="cofactor">
    <cofactor evidence="1">
        <name>Fe cation</name>
        <dbReference type="ChEBI" id="CHEBI:24875"/>
    </cofactor>
    <text evidence="1">Binds 2 iron ions per subunit.</text>
</comment>
<comment type="pathway">
    <text evidence="1">Cofactor biosynthesis; ubiquinone biosynthesis.</text>
</comment>
<comment type="subcellular location">
    <subcellularLocation>
        <location evidence="1">Cell membrane</location>
        <topology evidence="1">Peripheral membrane protein</topology>
    </subcellularLocation>
</comment>
<comment type="similarity">
    <text evidence="1">Belongs to the COQ7 family.</text>
</comment>
<proteinExistence type="inferred from homology"/>
<reference key="1">
    <citation type="journal article" date="2008" name="BMC Genomics">
        <title>Genome sequence and rapid evolution of the rice pathogen Xanthomonas oryzae pv. oryzae PXO99A.</title>
        <authorList>
            <person name="Salzberg S.L."/>
            <person name="Sommer D.D."/>
            <person name="Schatz M.C."/>
            <person name="Phillippy A.M."/>
            <person name="Rabinowicz P.D."/>
            <person name="Tsuge S."/>
            <person name="Furutani A."/>
            <person name="Ochiai H."/>
            <person name="Delcher A.L."/>
            <person name="Kelley D."/>
            <person name="Madupu R."/>
            <person name="Puiu D."/>
            <person name="Radune D."/>
            <person name="Shumway M."/>
            <person name="Trapnell C."/>
            <person name="Aparna G."/>
            <person name="Jha G."/>
            <person name="Pandey A."/>
            <person name="Patil P.B."/>
            <person name="Ishihara H."/>
            <person name="Meyer D.F."/>
            <person name="Szurek B."/>
            <person name="Verdier V."/>
            <person name="Koebnik R."/>
            <person name="Dow J.M."/>
            <person name="Ryan R.P."/>
            <person name="Hirata H."/>
            <person name="Tsuyumu S."/>
            <person name="Won Lee S."/>
            <person name="Seo Y.-S."/>
            <person name="Sriariyanum M."/>
            <person name="Ronald P.C."/>
            <person name="Sonti R.V."/>
            <person name="Van Sluys M.-A."/>
            <person name="Leach J.E."/>
            <person name="White F.F."/>
            <person name="Bogdanove A.J."/>
        </authorList>
    </citation>
    <scope>NUCLEOTIDE SEQUENCE [LARGE SCALE GENOMIC DNA]</scope>
    <source>
        <strain>PXO99A</strain>
    </source>
</reference>
<gene>
    <name evidence="1" type="primary">coq7</name>
    <name type="ordered locus">PXO_04009</name>
</gene>
<accession>B2SL08</accession>
<sequence>MTQTSPSRLHSPLDRLLVEAQRALDTVFGNPPAERPNPAADTPDIALDPEQRRHAAGLMRINHVGEVCAQGLYFGQAAVARDAHTQHHLLEAAQEETDHLAWCADRLHELDSRPSLLNPLWYAGSYALGALAGLRGDDWSLGFVVETERQVEAHLDEHLETLPDIDQRSRAILRVMKIDEARHADQAEQAGARQLPAPIPGAMALASKLMKTVAYRL</sequence>
<evidence type="ECO:0000255" key="1">
    <source>
        <dbReference type="HAMAP-Rule" id="MF_01658"/>
    </source>
</evidence>
<name>COQ7_XANOP</name>
<dbReference type="EC" id="1.14.99.60" evidence="1"/>
<dbReference type="EMBL" id="CP000967">
    <property type="protein sequence ID" value="ACD57285.1"/>
    <property type="molecule type" value="Genomic_DNA"/>
</dbReference>
<dbReference type="RefSeq" id="WP_011260492.1">
    <property type="nucleotide sequence ID" value="NC_010717.2"/>
</dbReference>
<dbReference type="SMR" id="B2SL08"/>
<dbReference type="KEGG" id="xop:PXO_04009"/>
<dbReference type="eggNOG" id="COG2941">
    <property type="taxonomic scope" value="Bacteria"/>
</dbReference>
<dbReference type="HOGENOM" id="CLU_088601_0_0_6"/>
<dbReference type="UniPathway" id="UPA00232"/>
<dbReference type="Proteomes" id="UP000001740">
    <property type="component" value="Chromosome"/>
</dbReference>
<dbReference type="GO" id="GO:0005886">
    <property type="term" value="C:plasma membrane"/>
    <property type="evidence" value="ECO:0007669"/>
    <property type="project" value="UniProtKB-SubCell"/>
</dbReference>
<dbReference type="GO" id="GO:0008682">
    <property type="term" value="F:3-demethoxyubiquinol 3-hydroxylase activity"/>
    <property type="evidence" value="ECO:0007669"/>
    <property type="project" value="UniProtKB-EC"/>
</dbReference>
<dbReference type="GO" id="GO:0046872">
    <property type="term" value="F:metal ion binding"/>
    <property type="evidence" value="ECO:0007669"/>
    <property type="project" value="UniProtKB-KW"/>
</dbReference>
<dbReference type="GO" id="GO:0006744">
    <property type="term" value="P:ubiquinone biosynthetic process"/>
    <property type="evidence" value="ECO:0007669"/>
    <property type="project" value="UniProtKB-UniRule"/>
</dbReference>
<dbReference type="CDD" id="cd01042">
    <property type="entry name" value="DMQH"/>
    <property type="match status" value="1"/>
</dbReference>
<dbReference type="FunFam" id="1.20.1260.10:FF:000013">
    <property type="entry name" value="2-nonaprenyl-3-methyl-6-methoxy-1,4-benzoquinol hydroxylase"/>
    <property type="match status" value="1"/>
</dbReference>
<dbReference type="Gene3D" id="1.20.1260.10">
    <property type="match status" value="1"/>
</dbReference>
<dbReference type="HAMAP" id="MF_01658">
    <property type="entry name" value="COQ7"/>
    <property type="match status" value="1"/>
</dbReference>
<dbReference type="InterPro" id="IPR047809">
    <property type="entry name" value="COQ7_proteobact"/>
</dbReference>
<dbReference type="InterPro" id="IPR012347">
    <property type="entry name" value="Ferritin-like"/>
</dbReference>
<dbReference type="InterPro" id="IPR009078">
    <property type="entry name" value="Ferritin-like_SF"/>
</dbReference>
<dbReference type="InterPro" id="IPR011566">
    <property type="entry name" value="Ubq_synth_Coq7"/>
</dbReference>
<dbReference type="NCBIfam" id="NF033656">
    <property type="entry name" value="DMQ_monoox_COQ7"/>
    <property type="match status" value="1"/>
</dbReference>
<dbReference type="PANTHER" id="PTHR11237:SF4">
    <property type="entry name" value="5-DEMETHOXYUBIQUINONE HYDROXYLASE, MITOCHONDRIAL"/>
    <property type="match status" value="1"/>
</dbReference>
<dbReference type="PANTHER" id="PTHR11237">
    <property type="entry name" value="COENZYME Q10 BIOSYNTHESIS PROTEIN 7"/>
    <property type="match status" value="1"/>
</dbReference>
<dbReference type="Pfam" id="PF03232">
    <property type="entry name" value="COQ7"/>
    <property type="match status" value="1"/>
</dbReference>
<dbReference type="SUPFAM" id="SSF47240">
    <property type="entry name" value="Ferritin-like"/>
    <property type="match status" value="1"/>
</dbReference>
<organism>
    <name type="scientific">Xanthomonas oryzae pv. oryzae (strain PXO99A)</name>
    <dbReference type="NCBI Taxonomy" id="360094"/>
    <lineage>
        <taxon>Bacteria</taxon>
        <taxon>Pseudomonadati</taxon>
        <taxon>Pseudomonadota</taxon>
        <taxon>Gammaproteobacteria</taxon>
        <taxon>Lysobacterales</taxon>
        <taxon>Lysobacteraceae</taxon>
        <taxon>Xanthomonas</taxon>
    </lineage>
</organism>